<proteinExistence type="inferred from homology"/>
<protein>
    <recommendedName>
        <fullName evidence="1">2,3-bisphosphoglycerate-dependent phosphoglycerate mutase</fullName>
        <shortName evidence="1">BPG-dependent PGAM</shortName>
        <shortName evidence="1">PGAM</shortName>
        <shortName evidence="1">Phosphoglyceromutase</shortName>
        <shortName evidence="1">dPGM</shortName>
        <ecNumber evidence="1">5.4.2.11</ecNumber>
    </recommendedName>
</protein>
<sequence length="206" mass="23175">MGRTLVLIRHGQSEWNLKNLFTGWKDPDLTEKGHAEAIAAGKKLKETGVKFDIAYTSALQRAQKTAQHILEQMGQSDLEMIKSAALNERNYGDLSGLNKDEVRQQWGEEQVKMWRRSYTIAPPNGESLRDTGARIWPYYLYHIQPHILRSQTVLIAAHGNSLRALMMALEGLNGEEIISQELATGIPIIYTFNPDSTISSKTIITP</sequence>
<reference key="1">
    <citation type="journal article" date="2007" name="Nat. Genet.">
        <title>Genomic analysis of Bartonella identifies type IV secretion systems as host adaptability factors.</title>
        <authorList>
            <person name="Saenz H.L."/>
            <person name="Engel P."/>
            <person name="Stoeckli M.C."/>
            <person name="Lanz C."/>
            <person name="Raddatz G."/>
            <person name="Vayssier-Taussat M."/>
            <person name="Birtles R."/>
            <person name="Schuster S.C."/>
            <person name="Dehio C."/>
        </authorList>
    </citation>
    <scope>NUCLEOTIDE SEQUENCE [LARGE SCALE GENOMIC DNA]</scope>
    <source>
        <strain>CIP 105476 / IBS 506</strain>
    </source>
</reference>
<dbReference type="EC" id="5.4.2.11" evidence="1"/>
<dbReference type="EMBL" id="AM260525">
    <property type="protein sequence ID" value="CAK02161.1"/>
    <property type="molecule type" value="Genomic_DNA"/>
</dbReference>
<dbReference type="RefSeq" id="WP_012232237.1">
    <property type="nucleotide sequence ID" value="NC_010161.1"/>
</dbReference>
<dbReference type="SMR" id="A9IXE7"/>
<dbReference type="KEGG" id="btr:BT_1894"/>
<dbReference type="eggNOG" id="COG0588">
    <property type="taxonomic scope" value="Bacteria"/>
</dbReference>
<dbReference type="HOGENOM" id="CLU_033323_1_4_5"/>
<dbReference type="UniPathway" id="UPA00109">
    <property type="reaction ID" value="UER00186"/>
</dbReference>
<dbReference type="Proteomes" id="UP000001592">
    <property type="component" value="Chromosome"/>
</dbReference>
<dbReference type="GO" id="GO:0004619">
    <property type="term" value="F:phosphoglycerate mutase activity"/>
    <property type="evidence" value="ECO:0007669"/>
    <property type="project" value="UniProtKB-EC"/>
</dbReference>
<dbReference type="GO" id="GO:0006094">
    <property type="term" value="P:gluconeogenesis"/>
    <property type="evidence" value="ECO:0007669"/>
    <property type="project" value="UniProtKB-UniRule"/>
</dbReference>
<dbReference type="GO" id="GO:0006096">
    <property type="term" value="P:glycolytic process"/>
    <property type="evidence" value="ECO:0007669"/>
    <property type="project" value="UniProtKB-UniRule"/>
</dbReference>
<dbReference type="CDD" id="cd07067">
    <property type="entry name" value="HP_PGM_like"/>
    <property type="match status" value="1"/>
</dbReference>
<dbReference type="Gene3D" id="3.40.50.1240">
    <property type="entry name" value="Phosphoglycerate mutase-like"/>
    <property type="match status" value="1"/>
</dbReference>
<dbReference type="HAMAP" id="MF_01039">
    <property type="entry name" value="PGAM_GpmA"/>
    <property type="match status" value="1"/>
</dbReference>
<dbReference type="InterPro" id="IPR013078">
    <property type="entry name" value="His_Pase_superF_clade-1"/>
</dbReference>
<dbReference type="InterPro" id="IPR029033">
    <property type="entry name" value="His_PPase_superfam"/>
</dbReference>
<dbReference type="InterPro" id="IPR001345">
    <property type="entry name" value="PG/BPGM_mutase_AS"/>
</dbReference>
<dbReference type="InterPro" id="IPR005952">
    <property type="entry name" value="Phosphogly_mut1"/>
</dbReference>
<dbReference type="NCBIfam" id="TIGR01258">
    <property type="entry name" value="pgm_1"/>
    <property type="match status" value="1"/>
</dbReference>
<dbReference type="NCBIfam" id="NF002339">
    <property type="entry name" value="PRK01295.1"/>
    <property type="match status" value="1"/>
</dbReference>
<dbReference type="PANTHER" id="PTHR11931">
    <property type="entry name" value="PHOSPHOGLYCERATE MUTASE"/>
    <property type="match status" value="1"/>
</dbReference>
<dbReference type="Pfam" id="PF00300">
    <property type="entry name" value="His_Phos_1"/>
    <property type="match status" value="1"/>
</dbReference>
<dbReference type="PIRSF" id="PIRSF000709">
    <property type="entry name" value="6PFK_2-Ptase"/>
    <property type="match status" value="1"/>
</dbReference>
<dbReference type="SMART" id="SM00855">
    <property type="entry name" value="PGAM"/>
    <property type="match status" value="1"/>
</dbReference>
<dbReference type="SUPFAM" id="SSF53254">
    <property type="entry name" value="Phosphoglycerate mutase-like"/>
    <property type="match status" value="1"/>
</dbReference>
<dbReference type="PROSITE" id="PS00175">
    <property type="entry name" value="PG_MUTASE"/>
    <property type="match status" value="1"/>
</dbReference>
<accession>A9IXE7</accession>
<gene>
    <name evidence="1" type="primary">gpmA</name>
    <name type="ordered locus">BT_1894</name>
</gene>
<comment type="function">
    <text evidence="1">Catalyzes the interconversion of 2-phosphoglycerate and 3-phosphoglycerate.</text>
</comment>
<comment type="catalytic activity">
    <reaction evidence="1">
        <text>(2R)-2-phosphoglycerate = (2R)-3-phosphoglycerate</text>
        <dbReference type="Rhea" id="RHEA:15901"/>
        <dbReference type="ChEBI" id="CHEBI:58272"/>
        <dbReference type="ChEBI" id="CHEBI:58289"/>
        <dbReference type="EC" id="5.4.2.11"/>
    </reaction>
</comment>
<comment type="pathway">
    <text evidence="1">Carbohydrate degradation; glycolysis; pyruvate from D-glyceraldehyde 3-phosphate: step 3/5.</text>
</comment>
<comment type="subunit">
    <text evidence="1">Homodimer.</text>
</comment>
<comment type="similarity">
    <text evidence="1">Belongs to the phosphoglycerate mutase family. BPG-dependent PGAM subfamily.</text>
</comment>
<keyword id="KW-0312">Gluconeogenesis</keyword>
<keyword id="KW-0324">Glycolysis</keyword>
<keyword id="KW-0413">Isomerase</keyword>
<organism>
    <name type="scientific">Bartonella tribocorum (strain CIP 105476 / IBS 506)</name>
    <dbReference type="NCBI Taxonomy" id="382640"/>
    <lineage>
        <taxon>Bacteria</taxon>
        <taxon>Pseudomonadati</taxon>
        <taxon>Pseudomonadota</taxon>
        <taxon>Alphaproteobacteria</taxon>
        <taxon>Hyphomicrobiales</taxon>
        <taxon>Bartonellaceae</taxon>
        <taxon>Bartonella</taxon>
    </lineage>
</organism>
<feature type="chain" id="PRO_1000084317" description="2,3-bisphosphoglycerate-dependent phosphoglycerate mutase">
    <location>
        <begin position="1"/>
        <end position="206"/>
    </location>
</feature>
<feature type="active site" description="Tele-phosphohistidine intermediate" evidence="1">
    <location>
        <position position="10"/>
    </location>
</feature>
<feature type="active site" description="Proton donor/acceptor" evidence="1">
    <location>
        <position position="88"/>
    </location>
</feature>
<feature type="binding site" evidence="1">
    <location>
        <begin position="9"/>
        <end position="16"/>
    </location>
    <ligand>
        <name>substrate</name>
    </ligand>
</feature>
<feature type="binding site" evidence="1">
    <location>
        <begin position="22"/>
        <end position="23"/>
    </location>
    <ligand>
        <name>substrate</name>
    </ligand>
</feature>
<feature type="binding site" evidence="1">
    <location>
        <position position="61"/>
    </location>
    <ligand>
        <name>substrate</name>
    </ligand>
</feature>
<feature type="binding site" evidence="1">
    <location>
        <begin position="88"/>
        <end position="91"/>
    </location>
    <ligand>
        <name>substrate</name>
    </ligand>
</feature>
<feature type="binding site" evidence="1">
    <location>
        <position position="99"/>
    </location>
    <ligand>
        <name>substrate</name>
    </ligand>
</feature>
<feature type="binding site" evidence="1">
    <location>
        <begin position="115"/>
        <end position="116"/>
    </location>
    <ligand>
        <name>substrate</name>
    </ligand>
</feature>
<feature type="binding site" evidence="1">
    <location>
        <begin position="159"/>
        <end position="160"/>
    </location>
    <ligand>
        <name>substrate</name>
    </ligand>
</feature>
<feature type="site" description="Transition state stabilizer" evidence="1">
    <location>
        <position position="158"/>
    </location>
</feature>
<name>GPMA_BART1</name>
<evidence type="ECO:0000255" key="1">
    <source>
        <dbReference type="HAMAP-Rule" id="MF_01039"/>
    </source>
</evidence>